<comment type="function">
    <text evidence="2">Part of the Ced system, which is involved in DNA import.</text>
</comment>
<comment type="subunit">
    <text evidence="2">Forms a complex composed of CedA, CedA1 and CedA2.</text>
</comment>
<comment type="subcellular location">
    <subcellularLocation>
        <location evidence="2">Cell membrane</location>
        <topology evidence="1">Multi-pass membrane protein</topology>
    </subcellularLocation>
</comment>
<comment type="induction">
    <text evidence="2">Up-regulated upon UV stress.</text>
</comment>
<keyword id="KW-1003">Cell membrane</keyword>
<keyword id="KW-0472">Membrane</keyword>
<keyword id="KW-1185">Reference proteome</keyword>
<keyword id="KW-0812">Transmembrane</keyword>
<keyword id="KW-1133">Transmembrane helix</keyword>
<keyword id="KW-0813">Transport</keyword>
<evidence type="ECO:0000255" key="1"/>
<evidence type="ECO:0000269" key="2">
    <source>
    </source>
</evidence>
<evidence type="ECO:0000303" key="3">
    <source>
    </source>
</evidence>
<evidence type="ECO:0000305" key="4"/>
<evidence type="ECO:0000312" key="5">
    <source>
        <dbReference type="EMBL" id="AAY79961.1"/>
    </source>
</evidence>
<dbReference type="EMBL" id="CP000077">
    <property type="protein sequence ID" value="AAY79961.1"/>
    <property type="molecule type" value="Genomic_DNA"/>
</dbReference>
<dbReference type="RefSeq" id="WP_011277463.1">
    <property type="nucleotide sequence ID" value="NC_007181.1"/>
</dbReference>
<dbReference type="SMR" id="Q4JB68"/>
<dbReference type="STRING" id="330779.Saci_0569"/>
<dbReference type="TCDB" id="9.A.53.1.1">
    <property type="family name" value="the crenarchaeal system for exchange of dna (ced) family"/>
</dbReference>
<dbReference type="GeneID" id="14551090"/>
<dbReference type="GeneID" id="78440912"/>
<dbReference type="KEGG" id="sai:Saci_0569"/>
<dbReference type="PATRIC" id="fig|330779.12.peg.548"/>
<dbReference type="eggNOG" id="arCOG04068">
    <property type="taxonomic scope" value="Archaea"/>
</dbReference>
<dbReference type="HOGENOM" id="CLU_190408_0_0_2"/>
<dbReference type="Proteomes" id="UP000001018">
    <property type="component" value="Chromosome"/>
</dbReference>
<dbReference type="GO" id="GO:0005886">
    <property type="term" value="C:plasma membrane"/>
    <property type="evidence" value="ECO:0007669"/>
    <property type="project" value="UniProtKB-SubCell"/>
</dbReference>
<dbReference type="InterPro" id="IPR049689">
    <property type="entry name" value="CedA1_arc"/>
</dbReference>
<dbReference type="NCBIfam" id="NF041797">
    <property type="entry name" value="Ced_CedA1"/>
    <property type="match status" value="1"/>
</dbReference>
<accession>Q4JB68</accession>
<protein>
    <recommendedName>
        <fullName evidence="4">DNA import protein CedA1</fullName>
    </recommendedName>
    <alternativeName>
        <fullName evidence="3">Crenarchaeal system for exchange of DNA protein A1</fullName>
    </alternativeName>
</protein>
<sequence>MTLVTFIENLTSTVTEIGWSLFILAWAIGWALRGSPIPIFRIKRGGQDLLEDAIIAAFFLAIGSTIFYLISYIASQVS</sequence>
<gene>
    <name evidence="3" type="primary">cedA1</name>
    <name evidence="5" type="ordered locus">Saci_0569</name>
</gene>
<feature type="chain" id="PRO_0000437446" description="DNA import protein CedA1">
    <location>
        <begin position="1"/>
        <end position="78"/>
    </location>
</feature>
<feature type="transmembrane region" description="Helical" evidence="1">
    <location>
        <begin position="12"/>
        <end position="32"/>
    </location>
</feature>
<feature type="transmembrane region" description="Helical" evidence="1">
    <location>
        <begin position="53"/>
        <end position="73"/>
    </location>
</feature>
<name>CEDA1_SULAC</name>
<proteinExistence type="evidence at protein level"/>
<reference key="1">
    <citation type="journal article" date="2005" name="J. Bacteriol.">
        <title>The genome of Sulfolobus acidocaldarius, a model organism of the Crenarchaeota.</title>
        <authorList>
            <person name="Chen L."/>
            <person name="Bruegger K."/>
            <person name="Skovgaard M."/>
            <person name="Redder P."/>
            <person name="She Q."/>
            <person name="Torarinsson E."/>
            <person name="Greve B."/>
            <person name="Awayez M."/>
            <person name="Zibat A."/>
            <person name="Klenk H.-P."/>
            <person name="Garrett R.A."/>
        </authorList>
    </citation>
    <scope>NUCLEOTIDE SEQUENCE [LARGE SCALE GENOMIC DNA]</scope>
    <source>
        <strain>ATCC 33909 / DSM 639 / JCM 8929 / NBRC 15157 / NCIMB 11770</strain>
    </source>
</reference>
<reference key="2">
    <citation type="journal article" date="2016" name="Proc. Natl. Acad. Sci. U.S.A.">
        <title>The archaeal Ced system imports DNA.</title>
        <authorList>
            <person name="van Wolferen M."/>
            <person name="Wagner A."/>
            <person name="van der Does C."/>
            <person name="Albers S.V."/>
        </authorList>
    </citation>
    <scope>FUNCTION</scope>
    <scope>SUBUNIT</scope>
    <scope>SUBCELLULAR LOCATION</scope>
    <scope>INDUCTION</scope>
    <source>
        <strain>JDS22</strain>
        <strain>MW001</strain>
    </source>
</reference>
<organism>
    <name type="scientific">Sulfolobus acidocaldarius (strain ATCC 33909 / DSM 639 / JCM 8929 / NBRC 15157 / NCIMB 11770)</name>
    <dbReference type="NCBI Taxonomy" id="330779"/>
    <lineage>
        <taxon>Archaea</taxon>
        <taxon>Thermoproteota</taxon>
        <taxon>Thermoprotei</taxon>
        <taxon>Sulfolobales</taxon>
        <taxon>Sulfolobaceae</taxon>
        <taxon>Sulfolobus</taxon>
    </lineage>
</organism>